<organism>
    <name type="scientific">Rattus norvegicus</name>
    <name type="common">Rat</name>
    <dbReference type="NCBI Taxonomy" id="10116"/>
    <lineage>
        <taxon>Eukaryota</taxon>
        <taxon>Metazoa</taxon>
        <taxon>Chordata</taxon>
        <taxon>Craniata</taxon>
        <taxon>Vertebrata</taxon>
        <taxon>Euteleostomi</taxon>
        <taxon>Mammalia</taxon>
        <taxon>Eutheria</taxon>
        <taxon>Euarchontoglires</taxon>
        <taxon>Glires</taxon>
        <taxon>Rodentia</taxon>
        <taxon>Myomorpha</taxon>
        <taxon>Muroidea</taxon>
        <taxon>Muridae</taxon>
        <taxon>Murinae</taxon>
        <taxon>Rattus</taxon>
    </lineage>
</organism>
<proteinExistence type="evidence at transcript level"/>
<reference key="1">
    <citation type="journal article" date="2004" name="Nature">
        <title>Genome sequence of the Brown Norway rat yields insights into mammalian evolution.</title>
        <authorList>
            <person name="Gibbs R.A."/>
            <person name="Weinstock G.M."/>
            <person name="Metzker M.L."/>
            <person name="Muzny D.M."/>
            <person name="Sodergren E.J."/>
            <person name="Scherer S."/>
            <person name="Scott G."/>
            <person name="Steffen D."/>
            <person name="Worley K.C."/>
            <person name="Burch P.E."/>
            <person name="Okwuonu G."/>
            <person name="Hines S."/>
            <person name="Lewis L."/>
            <person name="Deramo C."/>
            <person name="Delgado O."/>
            <person name="Dugan-Rocha S."/>
            <person name="Miner G."/>
            <person name="Morgan M."/>
            <person name="Hawes A."/>
            <person name="Gill R."/>
            <person name="Holt R.A."/>
            <person name="Adams M.D."/>
            <person name="Amanatides P.G."/>
            <person name="Baden-Tillson H."/>
            <person name="Barnstead M."/>
            <person name="Chin S."/>
            <person name="Evans C.A."/>
            <person name="Ferriera S."/>
            <person name="Fosler C."/>
            <person name="Glodek A."/>
            <person name="Gu Z."/>
            <person name="Jennings D."/>
            <person name="Kraft C.L."/>
            <person name="Nguyen T."/>
            <person name="Pfannkoch C.M."/>
            <person name="Sitter C."/>
            <person name="Sutton G.G."/>
            <person name="Venter J.C."/>
            <person name="Woodage T."/>
            <person name="Smith D."/>
            <person name="Lee H.-M."/>
            <person name="Gustafson E."/>
            <person name="Cahill P."/>
            <person name="Kana A."/>
            <person name="Doucette-Stamm L."/>
            <person name="Weinstock K."/>
            <person name="Fechtel K."/>
            <person name="Weiss R.B."/>
            <person name="Dunn D.M."/>
            <person name="Green E.D."/>
            <person name="Blakesley R.W."/>
            <person name="Bouffard G.G."/>
            <person name="De Jong P.J."/>
            <person name="Osoegawa K."/>
            <person name="Zhu B."/>
            <person name="Marra M."/>
            <person name="Schein J."/>
            <person name="Bosdet I."/>
            <person name="Fjell C."/>
            <person name="Jones S."/>
            <person name="Krzywinski M."/>
            <person name="Mathewson C."/>
            <person name="Siddiqui A."/>
            <person name="Wye N."/>
            <person name="McPherson J."/>
            <person name="Zhao S."/>
            <person name="Fraser C.M."/>
            <person name="Shetty J."/>
            <person name="Shatsman S."/>
            <person name="Geer K."/>
            <person name="Chen Y."/>
            <person name="Abramzon S."/>
            <person name="Nierman W.C."/>
            <person name="Havlak P.H."/>
            <person name="Chen R."/>
            <person name="Durbin K.J."/>
            <person name="Egan A."/>
            <person name="Ren Y."/>
            <person name="Song X.-Z."/>
            <person name="Li B."/>
            <person name="Liu Y."/>
            <person name="Qin X."/>
            <person name="Cawley S."/>
            <person name="Cooney A.J."/>
            <person name="D'Souza L.M."/>
            <person name="Martin K."/>
            <person name="Wu J.Q."/>
            <person name="Gonzalez-Garay M.L."/>
            <person name="Jackson A.R."/>
            <person name="Kalafus K.J."/>
            <person name="McLeod M.P."/>
            <person name="Milosavljevic A."/>
            <person name="Virk D."/>
            <person name="Volkov A."/>
            <person name="Wheeler D.A."/>
            <person name="Zhang Z."/>
            <person name="Bailey J.A."/>
            <person name="Eichler E.E."/>
            <person name="Tuzun E."/>
            <person name="Birney E."/>
            <person name="Mongin E."/>
            <person name="Ureta-Vidal A."/>
            <person name="Woodwark C."/>
            <person name="Zdobnov E."/>
            <person name="Bork P."/>
            <person name="Suyama M."/>
            <person name="Torrents D."/>
            <person name="Alexandersson M."/>
            <person name="Trask B.J."/>
            <person name="Young J.M."/>
            <person name="Huang H."/>
            <person name="Wang H."/>
            <person name="Xing H."/>
            <person name="Daniels S."/>
            <person name="Gietzen D."/>
            <person name="Schmidt J."/>
            <person name="Stevens K."/>
            <person name="Vitt U."/>
            <person name="Wingrove J."/>
            <person name="Camara F."/>
            <person name="Mar Alba M."/>
            <person name="Abril J.F."/>
            <person name="Guigo R."/>
            <person name="Smit A."/>
            <person name="Dubchak I."/>
            <person name="Rubin E.M."/>
            <person name="Couronne O."/>
            <person name="Poliakov A."/>
            <person name="Huebner N."/>
            <person name="Ganten D."/>
            <person name="Goesele C."/>
            <person name="Hummel O."/>
            <person name="Kreitler T."/>
            <person name="Lee Y.-A."/>
            <person name="Monti J."/>
            <person name="Schulz H."/>
            <person name="Zimdahl H."/>
            <person name="Himmelbauer H."/>
            <person name="Lehrach H."/>
            <person name="Jacob H.J."/>
            <person name="Bromberg S."/>
            <person name="Gullings-Handley J."/>
            <person name="Jensen-Seaman M.I."/>
            <person name="Kwitek A.E."/>
            <person name="Lazar J."/>
            <person name="Pasko D."/>
            <person name="Tonellato P.J."/>
            <person name="Twigger S."/>
            <person name="Ponting C.P."/>
            <person name="Duarte J.M."/>
            <person name="Rice S."/>
            <person name="Goodstadt L."/>
            <person name="Beatson S.A."/>
            <person name="Emes R.D."/>
            <person name="Winter E.E."/>
            <person name="Webber C."/>
            <person name="Brandt P."/>
            <person name="Nyakatura G."/>
            <person name="Adetobi M."/>
            <person name="Chiaromonte F."/>
            <person name="Elnitski L."/>
            <person name="Eswara P."/>
            <person name="Hardison R.C."/>
            <person name="Hou M."/>
            <person name="Kolbe D."/>
            <person name="Makova K."/>
            <person name="Miller W."/>
            <person name="Nekrutenko A."/>
            <person name="Riemer C."/>
            <person name="Schwartz S."/>
            <person name="Taylor J."/>
            <person name="Yang S."/>
            <person name="Zhang Y."/>
            <person name="Lindpaintner K."/>
            <person name="Andrews T.D."/>
            <person name="Caccamo M."/>
            <person name="Clamp M."/>
            <person name="Clarke L."/>
            <person name="Curwen V."/>
            <person name="Durbin R.M."/>
            <person name="Eyras E."/>
            <person name="Searle S.M."/>
            <person name="Cooper G.M."/>
            <person name="Batzoglou S."/>
            <person name="Brudno M."/>
            <person name="Sidow A."/>
            <person name="Stone E.A."/>
            <person name="Payseur B.A."/>
            <person name="Bourque G."/>
            <person name="Lopez-Otin C."/>
            <person name="Puente X.S."/>
            <person name="Chakrabarti K."/>
            <person name="Chatterji S."/>
            <person name="Dewey C."/>
            <person name="Pachter L."/>
            <person name="Bray N."/>
            <person name="Yap V.B."/>
            <person name="Caspi A."/>
            <person name="Tesler G."/>
            <person name="Pevzner P.A."/>
            <person name="Haussler D."/>
            <person name="Roskin K.M."/>
            <person name="Baertsch R."/>
            <person name="Clawson H."/>
            <person name="Furey T.S."/>
            <person name="Hinrichs A.S."/>
            <person name="Karolchik D."/>
            <person name="Kent W.J."/>
            <person name="Rosenbloom K.R."/>
            <person name="Trumbower H."/>
            <person name="Weirauch M."/>
            <person name="Cooper D.N."/>
            <person name="Stenson P.D."/>
            <person name="Ma B."/>
            <person name="Brent M."/>
            <person name="Arumugam M."/>
            <person name="Shteynberg D."/>
            <person name="Copley R.R."/>
            <person name="Taylor M.S."/>
            <person name="Riethman H."/>
            <person name="Mudunuri U."/>
            <person name="Peterson J."/>
            <person name="Guyer M."/>
            <person name="Felsenfeld A."/>
            <person name="Old S."/>
            <person name="Mockrin S."/>
            <person name="Collins F.S."/>
        </authorList>
    </citation>
    <scope>NUCLEOTIDE SEQUENCE [LARGE SCALE GENOMIC DNA]</scope>
    <source>
        <strain>Brown Norway</strain>
    </source>
</reference>
<reference key="2">
    <citation type="journal article" date="2004" name="Genome Res.">
        <title>The status, quality, and expansion of the NIH full-length cDNA project: the Mammalian Gene Collection (MGC).</title>
        <authorList>
            <consortium name="The MGC Project Team"/>
        </authorList>
    </citation>
    <scope>NUCLEOTIDE SEQUENCE [LARGE SCALE MRNA] (ISOFORM 2)</scope>
    <source>
        <tissue>Testis</tissue>
    </source>
</reference>
<protein>
    <recommendedName>
        <fullName>Protein fuzzy homolog</fullName>
    </recommendedName>
</protein>
<name>FUZZY_RAT</name>
<comment type="function">
    <text evidence="2">Probable planar cell polarity effector involved in cilium biogenesis. Proposed to function as core component of the CPLANE (ciliogenesis and planar polarity effectors) complex involved in the recruitment of peripheral IFT-A proteins to basal bodies. May regulate protein and membrane transport to the cilium. May regulate the morphogenesis of hair follicles which depends on functional primary cilia. Binds phosphatidylinositol 3-phosphate with highest affinity, followed by phosphatidylinositol 4-phosphate and phosphatidylinositol 5-phosphate (By similarity).</text>
</comment>
<comment type="subunit">
    <text evidence="2">Component of the CPLANE (ciliogenesis and planar polarity effectors) complex, composed of INTU, FUZ and WDPCP. Interacts with CPLANE1 and CPLANE2.</text>
</comment>
<comment type="subcellular location">
    <subcellularLocation>
        <location evidence="1">Cytoplasm</location>
    </subcellularLocation>
    <subcellularLocation>
        <location evidence="1">Cytoplasm</location>
        <location evidence="1">Cytoskeleton</location>
    </subcellularLocation>
    <subcellularLocation>
        <location evidence="2">Cytoplasm</location>
        <location evidence="2">Cytoskeleton</location>
        <location evidence="2">Cilium basal body</location>
    </subcellularLocation>
</comment>
<comment type="alternative products">
    <event type="alternative splicing"/>
    <isoform>
        <id>Q3B756-1</id>
        <name>1</name>
        <sequence type="displayed"/>
    </isoform>
    <isoform>
        <id>Q3B756-2</id>
        <name>2</name>
        <sequence type="described" ref="VSP_029969"/>
    </isoform>
</comment>
<comment type="similarity">
    <text evidence="4">Belongs to the fuzzy family.</text>
</comment>
<sequence length="415" mass="45407">MGDDGPGSTVHLLCLAASSGVPLFCRSSSGGAPSRQQLPFSVIGSLNGVHMFGQNLDVQLNSARTEDTTVVWKNFHDSITLIALSSEEGTSELKLERMLHMVFGAMVLIVGLEELTNIRNVERLKKELRASYCLIDSFLGNSELIGDLTQCVDCVIPPEGSVMQETLSGFAEATGTAFVSLLVSGRVVAATDGWWRLGMPEAVLLPWLVGSLPPQAARDYPVYLPHGSPTVPHRLLTLTLLRGLELCLLCGPRPPLGELDPQLLERWWQPLLEPLRACLPLGPRALPDGFPLHSDILGLLLLHLELRRCLFTVEPSKDKEPSPEQRRRLLRNFYTLVATTHFPPEPGPAEKQEDTVHPAQTPRACYLVLGPGMGWQLVAVQLGLRLLLLMLSPQTPTHGLRSLATHTLQALTPLL</sequence>
<keyword id="KW-0025">Alternative splicing</keyword>
<keyword id="KW-0966">Cell projection</keyword>
<keyword id="KW-0970">Cilium biogenesis/degradation</keyword>
<keyword id="KW-0963">Cytoplasm</keyword>
<keyword id="KW-0206">Cytoskeleton</keyword>
<keyword id="KW-0217">Developmental protein</keyword>
<keyword id="KW-0653">Protein transport</keyword>
<keyword id="KW-1185">Reference proteome</keyword>
<keyword id="KW-0813">Transport</keyword>
<dbReference type="EMBL" id="AABR03001834">
    <property type="status" value="NOT_ANNOTATED_CDS"/>
    <property type="molecule type" value="Genomic_DNA"/>
</dbReference>
<dbReference type="EMBL" id="BC107809">
    <property type="protein sequence ID" value="AAI07810.1"/>
    <property type="molecule type" value="mRNA"/>
</dbReference>
<dbReference type="RefSeq" id="NP_001032735.1">
    <molecule id="Q3B756-2"/>
    <property type="nucleotide sequence ID" value="NM_001037646.2"/>
</dbReference>
<dbReference type="RefSeq" id="NP_001386310.1">
    <molecule id="Q3B756-1"/>
    <property type="nucleotide sequence ID" value="NM_001399381.1"/>
</dbReference>
<dbReference type="RefSeq" id="XP_006229121.1">
    <property type="nucleotide sequence ID" value="XM_006229059.3"/>
</dbReference>
<dbReference type="SMR" id="Q3B756"/>
<dbReference type="FunCoup" id="Q3B756">
    <property type="interactions" value="1837"/>
</dbReference>
<dbReference type="STRING" id="10116.ENSRNOP00000070688"/>
<dbReference type="PhosphoSitePlus" id="Q3B756"/>
<dbReference type="PaxDb" id="10116-ENSRNOP00000027701"/>
<dbReference type="Ensembl" id="ENSRNOT00000083336.2">
    <molecule id="Q3B756-1"/>
    <property type="protein sequence ID" value="ENSRNOP00000070688.1"/>
    <property type="gene ID" value="ENSRNOG00000053084.2"/>
</dbReference>
<dbReference type="Ensembl" id="ENSRNOT00000086890.2">
    <molecule id="Q3B756-2"/>
    <property type="protein sequence ID" value="ENSRNOP00000074982.1"/>
    <property type="gene ID" value="ENSRNOG00000053084.2"/>
</dbReference>
<dbReference type="GeneID" id="308577"/>
<dbReference type="KEGG" id="rno:308577"/>
<dbReference type="UCSC" id="RGD:1310608">
    <molecule id="Q3B756-1"/>
    <property type="organism name" value="rat"/>
</dbReference>
<dbReference type="AGR" id="RGD:1310608"/>
<dbReference type="CTD" id="80199"/>
<dbReference type="RGD" id="1310608">
    <property type="gene designation" value="Fuz"/>
</dbReference>
<dbReference type="eggNOG" id="ENOG502QVMY">
    <property type="taxonomic scope" value="Eukaryota"/>
</dbReference>
<dbReference type="GeneTree" id="ENSGT00390000010727"/>
<dbReference type="HOGENOM" id="CLU_041212_1_0_1"/>
<dbReference type="InParanoid" id="Q3B756"/>
<dbReference type="OMA" id="LDQYSCS"/>
<dbReference type="OrthoDB" id="74835at2759"/>
<dbReference type="PhylomeDB" id="Q3B756"/>
<dbReference type="TreeFam" id="TF324763"/>
<dbReference type="Reactome" id="R-RNO-5610787">
    <property type="pathway name" value="Hedgehog 'off' state"/>
</dbReference>
<dbReference type="PRO" id="PR:Q3B756"/>
<dbReference type="Proteomes" id="UP000002494">
    <property type="component" value="Chromosome 1"/>
</dbReference>
<dbReference type="Bgee" id="ENSRNOG00000053084">
    <property type="expression patterns" value="Expressed in skeletal muscle tissue and 18 other cell types or tissues"/>
</dbReference>
<dbReference type="GO" id="GO:0042995">
    <property type="term" value="C:cell projection"/>
    <property type="evidence" value="ECO:0007669"/>
    <property type="project" value="UniProtKB-KW"/>
</dbReference>
<dbReference type="GO" id="GO:0005737">
    <property type="term" value="C:cytoplasm"/>
    <property type="evidence" value="ECO:0007669"/>
    <property type="project" value="UniProtKB-SubCell"/>
</dbReference>
<dbReference type="GO" id="GO:0005856">
    <property type="term" value="C:cytoskeleton"/>
    <property type="evidence" value="ECO:0007669"/>
    <property type="project" value="UniProtKB-SubCell"/>
</dbReference>
<dbReference type="GO" id="GO:0035091">
    <property type="term" value="F:phosphatidylinositol binding"/>
    <property type="evidence" value="ECO:0000250"/>
    <property type="project" value="UniProtKB"/>
</dbReference>
<dbReference type="GO" id="GO:0009952">
    <property type="term" value="P:anterior/posterior pattern specification"/>
    <property type="evidence" value="ECO:0000266"/>
    <property type="project" value="RGD"/>
</dbReference>
<dbReference type="GO" id="GO:0035904">
    <property type="term" value="P:aorta development"/>
    <property type="evidence" value="ECO:0000266"/>
    <property type="project" value="RGD"/>
</dbReference>
<dbReference type="GO" id="GO:0003279">
    <property type="term" value="P:cardiac septum development"/>
    <property type="evidence" value="ECO:0000266"/>
    <property type="project" value="RGD"/>
</dbReference>
<dbReference type="GO" id="GO:0060271">
    <property type="term" value="P:cilium assembly"/>
    <property type="evidence" value="ECO:0000250"/>
    <property type="project" value="UniProtKB"/>
</dbReference>
<dbReference type="GO" id="GO:0060976">
    <property type="term" value="P:coronary vasculature development"/>
    <property type="evidence" value="ECO:0000266"/>
    <property type="project" value="RGD"/>
</dbReference>
<dbReference type="GO" id="GO:0010172">
    <property type="term" value="P:embryonic body morphogenesis"/>
    <property type="evidence" value="ECO:0000250"/>
    <property type="project" value="UniProtKB"/>
</dbReference>
<dbReference type="GO" id="GO:0042733">
    <property type="term" value="P:embryonic digit morphogenesis"/>
    <property type="evidence" value="ECO:0000266"/>
    <property type="project" value="RGD"/>
</dbReference>
<dbReference type="GO" id="GO:0048702">
    <property type="term" value="P:embryonic neurocranium morphogenesis"/>
    <property type="evidence" value="ECO:0000266"/>
    <property type="project" value="RGD"/>
</dbReference>
<dbReference type="GO" id="GO:0048704">
    <property type="term" value="P:embryonic skeletal system morphogenesis"/>
    <property type="evidence" value="ECO:0000250"/>
    <property type="project" value="UniProtKB"/>
</dbReference>
<dbReference type="GO" id="GO:0001736">
    <property type="term" value="P:establishment of planar polarity"/>
    <property type="evidence" value="ECO:0000250"/>
    <property type="project" value="UniProtKB"/>
</dbReference>
<dbReference type="GO" id="GO:0001942">
    <property type="term" value="P:hair follicle development"/>
    <property type="evidence" value="ECO:0000250"/>
    <property type="project" value="UniProtKB"/>
</dbReference>
<dbReference type="GO" id="GO:0120223">
    <property type="term" value="P:larynx morphogenesis"/>
    <property type="evidence" value="ECO:0000266"/>
    <property type="project" value="RGD"/>
</dbReference>
<dbReference type="GO" id="GO:0090090">
    <property type="term" value="P:negative regulation of canonical Wnt signaling pathway"/>
    <property type="evidence" value="ECO:0000250"/>
    <property type="project" value="UniProtKB"/>
</dbReference>
<dbReference type="GO" id="GO:0030336">
    <property type="term" value="P:negative regulation of cell migration"/>
    <property type="evidence" value="ECO:0000250"/>
    <property type="project" value="UniProtKB"/>
</dbReference>
<dbReference type="GO" id="GO:0008285">
    <property type="term" value="P:negative regulation of cell population proliferation"/>
    <property type="evidence" value="ECO:0000250"/>
    <property type="project" value="UniProtKB"/>
</dbReference>
<dbReference type="GO" id="GO:2000314">
    <property type="term" value="P:negative regulation of fibroblast growth factor receptor signaling pathway involved in neural plate anterior/posterior pattern formation"/>
    <property type="evidence" value="ECO:0000250"/>
    <property type="project" value="UniProtKB"/>
</dbReference>
<dbReference type="GO" id="GO:0090301">
    <property type="term" value="P:negative regulation of neural crest formation"/>
    <property type="evidence" value="ECO:0000250"/>
    <property type="project" value="UniProtKB"/>
</dbReference>
<dbReference type="GO" id="GO:0001843">
    <property type="term" value="P:neural tube closure"/>
    <property type="evidence" value="ECO:0000250"/>
    <property type="project" value="UniProtKB"/>
</dbReference>
<dbReference type="GO" id="GO:1905515">
    <property type="term" value="P:non-motile cilium assembly"/>
    <property type="evidence" value="ECO:0000250"/>
    <property type="project" value="UniProtKB"/>
</dbReference>
<dbReference type="GO" id="GO:0045724">
    <property type="term" value="P:positive regulation of cilium assembly"/>
    <property type="evidence" value="ECO:0000250"/>
    <property type="project" value="UniProtKB"/>
</dbReference>
<dbReference type="GO" id="GO:0010954">
    <property type="term" value="P:positive regulation of protein processing"/>
    <property type="evidence" value="ECO:0000266"/>
    <property type="project" value="RGD"/>
</dbReference>
<dbReference type="GO" id="GO:0015031">
    <property type="term" value="P:protein transport"/>
    <property type="evidence" value="ECO:0007669"/>
    <property type="project" value="UniProtKB-KW"/>
</dbReference>
<dbReference type="GO" id="GO:0008589">
    <property type="term" value="P:regulation of smoothened signaling pathway"/>
    <property type="evidence" value="ECO:0000250"/>
    <property type="project" value="UniProtKB"/>
</dbReference>
<dbReference type="GO" id="GO:0060021">
    <property type="term" value="P:roof of mouth development"/>
    <property type="evidence" value="ECO:0000266"/>
    <property type="project" value="RGD"/>
</dbReference>
<dbReference type="GO" id="GO:0021510">
    <property type="term" value="P:spinal cord development"/>
    <property type="evidence" value="ECO:0000266"/>
    <property type="project" value="RGD"/>
</dbReference>
<dbReference type="GO" id="GO:0021513">
    <property type="term" value="P:spinal cord dorsal/ventral patterning"/>
    <property type="evidence" value="ECO:0000266"/>
    <property type="project" value="RGD"/>
</dbReference>
<dbReference type="GO" id="GO:0043587">
    <property type="term" value="P:tongue morphogenesis"/>
    <property type="evidence" value="ECO:0000266"/>
    <property type="project" value="RGD"/>
</dbReference>
<dbReference type="GO" id="GO:0016192">
    <property type="term" value="P:vesicle-mediated transport"/>
    <property type="evidence" value="ECO:0007669"/>
    <property type="project" value="InterPro"/>
</dbReference>
<dbReference type="CDD" id="cd21091">
    <property type="entry name" value="Fuzzy"/>
    <property type="match status" value="1"/>
</dbReference>
<dbReference type="InterPro" id="IPR043972">
    <property type="entry name" value="FUZ/MON1/HPS1_longin_1"/>
</dbReference>
<dbReference type="InterPro" id="IPR043971">
    <property type="entry name" value="FUZ/MON1/HPS1_longin_2"/>
</dbReference>
<dbReference type="InterPro" id="IPR043970">
    <property type="entry name" value="FUZ/MON1/HPS1_longin_3"/>
</dbReference>
<dbReference type="InterPro" id="IPR026069">
    <property type="entry name" value="Fuzzy"/>
</dbReference>
<dbReference type="PANTHER" id="PTHR13559">
    <property type="entry name" value="INTRACELLULAR TRAFFIC PROTEIN-RELATED"/>
    <property type="match status" value="1"/>
</dbReference>
<dbReference type="PANTHER" id="PTHR13559:SF1">
    <property type="entry name" value="PROTEIN FUZZY HOMOLOG"/>
    <property type="match status" value="1"/>
</dbReference>
<dbReference type="Pfam" id="PF19036">
    <property type="entry name" value="Fuz_longin_1"/>
    <property type="match status" value="1"/>
</dbReference>
<dbReference type="Pfam" id="PF19037">
    <property type="entry name" value="Fuz_longin_2"/>
    <property type="match status" value="1"/>
</dbReference>
<dbReference type="Pfam" id="PF19038">
    <property type="entry name" value="Fuz_longin_3"/>
    <property type="match status" value="1"/>
</dbReference>
<evidence type="ECO:0000250" key="1">
    <source>
        <dbReference type="UniProtKB" id="Q2HZX7"/>
    </source>
</evidence>
<evidence type="ECO:0000250" key="2">
    <source>
        <dbReference type="UniProtKB" id="Q3UYI6"/>
    </source>
</evidence>
<evidence type="ECO:0000303" key="3">
    <source>
    </source>
</evidence>
<evidence type="ECO:0000305" key="4"/>
<feature type="chain" id="PRO_0000312922" description="Protein fuzzy homolog">
    <location>
        <begin position="1"/>
        <end position="415"/>
    </location>
</feature>
<feature type="splice variant" id="VSP_029969" description="In isoform 2." evidence="3">
    <location>
        <begin position="165"/>
        <end position="230"/>
    </location>
</feature>
<accession>Q3B756</accession>
<gene>
    <name type="primary">Fuz</name>
</gene>